<comment type="function">
    <text evidence="5 6 7 8">Binds both single-stranded and double-stranded DNA with higher affinity for the single-stranded form. Specifically binds to scaffold/matrix attachment region DNA. Also binds single-stranded RNA. Enhances RNA unwinding activity of DDX39A. May participate in important transcriptional or translational control of cell growth, metabolism and carcinogenesis. Component of the TREX complex which is thought to couple mRNA transcription, processing and nuclear export, and specifically associates with spliced mRNA and not with unspliced pre-mRNA (PubMed:15338056, PubMed:17196963, PubMed:20844015). The TREX complex is recruited to spliced mRNAs by a transcription-independent mechanism, binds to mRNA upstream of the exon-junction complex (EJC) and is recruited in a splicing- and cap-dependent manner to a region near the 5' end of the mRNA where it functions in mRNA export to the cytoplasm via the TAP/NXF1 pathway (PubMed:15338056, PubMed:17196963, PubMed:20844015). Associates with DDX39B, which facilitates RNA binding of DDX39B and likely plays a role in mRNA export (PubMed:37578863).</text>
</comment>
<comment type="subunit">
    <text evidence="6 7 8">Interacts with DDX39A (PubMed:17196963). Interacts with FUS (PubMed:17196963). Interacts (via the C-terminal domain) with DDX39B; the interaction is direct and facilitates RNA binding of DDX39B (PubMed:37578863). Component of the transcription/export (TREX) complex at least composed of ALYREF/THOC4, DDX39B, SARNP/CIP29, CHTOP and the THO subcomplex; TREX seems to have dynamic structure involving ATP-dependent remodeling; in the complex interacts directly with DDX39B in a ATP-dependent manner which bridges it to ALYREF/THOC4 (PubMed:17196963, PubMed:20844015).</text>
</comment>
<comment type="interaction">
    <interactant intactId="EBI-347495">
        <id>P82979</id>
    </interactant>
    <interactant intactId="EBI-348253">
        <id>O00148</id>
        <label>DDX39A</label>
    </interactant>
    <organismsDiffer>false</organismsDiffer>
    <experiments>6</experiments>
</comment>
<comment type="interaction">
    <interactant intactId="EBI-347495">
        <id>P82979</id>
    </interactant>
    <interactant intactId="EBI-348622">
        <id>Q13838</id>
        <label>DDX39B</label>
    </interactant>
    <organismsDiffer>false</organismsDiffer>
    <experiments>7</experiments>
</comment>
<comment type="interaction">
    <interactant intactId="EBI-347495">
        <id>P82979</id>
    </interactant>
    <interactant intactId="EBI-10038974">
        <id>Q6Y2X3</id>
        <label>DNAJC14</label>
    </interactant>
    <organismsDiffer>false</organismsDiffer>
    <experiments>3</experiments>
</comment>
<comment type="interaction">
    <interactant intactId="EBI-347495">
        <id>P82979</id>
    </interactant>
    <interactant intactId="EBI-632461">
        <id>Q01081</id>
        <label>U2AF1</label>
    </interactant>
    <organismsDiffer>false</organismsDiffer>
    <experiments>3</experiments>
</comment>
<comment type="interaction">
    <interactant intactId="EBI-347495">
        <id>P82979</id>
    </interactant>
    <interactant intactId="EBI-742339">
        <id>P26368</id>
        <label>U2AF2</label>
    </interactant>
    <organismsDiffer>false</organismsDiffer>
    <experiments>3</experiments>
</comment>
<comment type="interaction">
    <interactant intactId="EBI-347495">
        <id>P82979</id>
    </interactant>
    <interactant intactId="EBI-720609">
        <id>O76024</id>
        <label>WFS1</label>
    </interactant>
    <organismsDiffer>false</organismsDiffer>
    <experiments>3</experiments>
</comment>
<comment type="subcellular location">
    <subcellularLocation>
        <location>Nucleus</location>
    </subcellularLocation>
    <subcellularLocation>
        <location>Nucleus speckle</location>
    </subcellularLocation>
</comment>
<comment type="tissue specificity">
    <text evidence="4">Low expression in spleen, liver, pancreas, testis, thymus, heart, and kidney. Increased levels are seen in hepatocellular carcinoma and pancreatic adenocarcinoma.</text>
</comment>
<comment type="induction">
    <text>By EPO/erythropoietin.</text>
</comment>
<comment type="similarity">
    <text evidence="10">Belongs to the SAP domain-containing ribonucleoprotein family.</text>
</comment>
<comment type="sequence caution" evidence="10">
    <conflict type="frameshift">
        <sequence resource="EMBL-CDS" id="AAF28994"/>
    </conflict>
</comment>
<comment type="online information" name="Atlas of Genetics and Cytogenetics in Oncology and Haematology">
    <link uri="https://atlasgeneticsoncology.org/gene/42967/CIP29"/>
</comment>
<reference key="1">
    <citation type="journal article" date="2001" name="FEBS Lett.">
        <title>An integrated approach in the discovery and characterization of a novel nuclear protein over-expressed in liver and pancreatic tumors.</title>
        <authorList>
            <person name="Choong M.L."/>
            <person name="Tan L.K."/>
            <person name="Lo S.L."/>
            <person name="Ren E.-C."/>
            <person name="Ou K.L."/>
            <person name="Ong S.-E."/>
            <person name="Liang R.C.M.Y."/>
            <person name="Seow T.K."/>
            <person name="Chung M.C.M."/>
        </authorList>
    </citation>
    <scope>NUCLEOTIDE SEQUENCE [GENOMIC DNA]</scope>
    <scope>PROTEIN SEQUENCE OF 110-119; 157-167 AND 181-199</scope>
    <scope>TISSUE SPECIFICITY</scope>
    <scope>SUBCELLULAR LOCATION</scope>
    <source>
        <tissue>Liver</tissue>
    </source>
</reference>
<reference key="2">
    <citation type="journal article" date="2002" name="Biochem. Biophys. Res. Commun.">
        <title>Cloning and characterization of a proliferation-associated cytokine-inducible protein, CIP29.</title>
        <authorList>
            <person name="Fukuda S."/>
            <person name="Wu D.W."/>
            <person name="Stark K."/>
            <person name="Pelus L.M."/>
        </authorList>
    </citation>
    <scope>NUCLEOTIDE SEQUENCE [MRNA]</scope>
    <source>
        <tissue>Mammary cancer</tissue>
    </source>
</reference>
<reference key="3">
    <citation type="journal article" date="2000" name="Genome Res.">
        <title>Cloning and functional analysis of cDNAs with open reading frames for 300 previously undefined genes expressed in CD34+ hematopoietic stem/progenitor cells.</title>
        <authorList>
            <person name="Zhang Q.-H."/>
            <person name="Ye M."/>
            <person name="Wu X.-Y."/>
            <person name="Ren S.-X."/>
            <person name="Zhao M."/>
            <person name="Zhao C.-J."/>
            <person name="Fu G."/>
            <person name="Shen Y."/>
            <person name="Fan H.-Y."/>
            <person name="Lu G."/>
            <person name="Zhong M."/>
            <person name="Xu X.-R."/>
            <person name="Han Z.-G."/>
            <person name="Zhang J.-W."/>
            <person name="Tao J."/>
            <person name="Huang Q.-H."/>
            <person name="Zhou J."/>
            <person name="Hu G.-X."/>
            <person name="Gu J."/>
            <person name="Chen S.-J."/>
            <person name="Chen Z."/>
        </authorList>
    </citation>
    <scope>NUCLEOTIDE SEQUENCE [LARGE SCALE MRNA]</scope>
    <source>
        <tissue>Umbilical cord blood</tissue>
    </source>
</reference>
<reference key="4">
    <citation type="journal article" date="2004" name="Nat. Genet.">
        <title>Complete sequencing and characterization of 21,243 full-length human cDNAs.</title>
        <authorList>
            <person name="Ota T."/>
            <person name="Suzuki Y."/>
            <person name="Nishikawa T."/>
            <person name="Otsuki T."/>
            <person name="Sugiyama T."/>
            <person name="Irie R."/>
            <person name="Wakamatsu A."/>
            <person name="Hayashi K."/>
            <person name="Sato H."/>
            <person name="Nagai K."/>
            <person name="Kimura K."/>
            <person name="Makita H."/>
            <person name="Sekine M."/>
            <person name="Obayashi M."/>
            <person name="Nishi T."/>
            <person name="Shibahara T."/>
            <person name="Tanaka T."/>
            <person name="Ishii S."/>
            <person name="Yamamoto J."/>
            <person name="Saito K."/>
            <person name="Kawai Y."/>
            <person name="Isono Y."/>
            <person name="Nakamura Y."/>
            <person name="Nagahari K."/>
            <person name="Murakami K."/>
            <person name="Yasuda T."/>
            <person name="Iwayanagi T."/>
            <person name="Wagatsuma M."/>
            <person name="Shiratori A."/>
            <person name="Sudo H."/>
            <person name="Hosoiri T."/>
            <person name="Kaku Y."/>
            <person name="Kodaira H."/>
            <person name="Kondo H."/>
            <person name="Sugawara M."/>
            <person name="Takahashi M."/>
            <person name="Kanda K."/>
            <person name="Yokoi T."/>
            <person name="Furuya T."/>
            <person name="Kikkawa E."/>
            <person name="Omura Y."/>
            <person name="Abe K."/>
            <person name="Kamihara K."/>
            <person name="Katsuta N."/>
            <person name="Sato K."/>
            <person name="Tanikawa M."/>
            <person name="Yamazaki M."/>
            <person name="Ninomiya K."/>
            <person name="Ishibashi T."/>
            <person name="Yamashita H."/>
            <person name="Murakawa K."/>
            <person name="Fujimori K."/>
            <person name="Tanai H."/>
            <person name="Kimata M."/>
            <person name="Watanabe M."/>
            <person name="Hiraoka S."/>
            <person name="Chiba Y."/>
            <person name="Ishida S."/>
            <person name="Ono Y."/>
            <person name="Takiguchi S."/>
            <person name="Watanabe S."/>
            <person name="Yosida M."/>
            <person name="Hotuta T."/>
            <person name="Kusano J."/>
            <person name="Kanehori K."/>
            <person name="Takahashi-Fujii A."/>
            <person name="Hara H."/>
            <person name="Tanase T.-O."/>
            <person name="Nomura Y."/>
            <person name="Togiya S."/>
            <person name="Komai F."/>
            <person name="Hara R."/>
            <person name="Takeuchi K."/>
            <person name="Arita M."/>
            <person name="Imose N."/>
            <person name="Musashino K."/>
            <person name="Yuuki H."/>
            <person name="Oshima A."/>
            <person name="Sasaki N."/>
            <person name="Aotsuka S."/>
            <person name="Yoshikawa Y."/>
            <person name="Matsunawa H."/>
            <person name="Ichihara T."/>
            <person name="Shiohata N."/>
            <person name="Sano S."/>
            <person name="Moriya S."/>
            <person name="Momiyama H."/>
            <person name="Satoh N."/>
            <person name="Takami S."/>
            <person name="Terashima Y."/>
            <person name="Suzuki O."/>
            <person name="Nakagawa S."/>
            <person name="Senoh A."/>
            <person name="Mizoguchi H."/>
            <person name="Goto Y."/>
            <person name="Shimizu F."/>
            <person name="Wakebe H."/>
            <person name="Hishigaki H."/>
            <person name="Watanabe T."/>
            <person name="Sugiyama A."/>
            <person name="Takemoto M."/>
            <person name="Kawakami B."/>
            <person name="Yamazaki M."/>
            <person name="Watanabe K."/>
            <person name="Kumagai A."/>
            <person name="Itakura S."/>
            <person name="Fukuzumi Y."/>
            <person name="Fujimori Y."/>
            <person name="Komiyama M."/>
            <person name="Tashiro H."/>
            <person name="Tanigami A."/>
            <person name="Fujiwara T."/>
            <person name="Ono T."/>
            <person name="Yamada K."/>
            <person name="Fujii Y."/>
            <person name="Ozaki K."/>
            <person name="Hirao M."/>
            <person name="Ohmori Y."/>
            <person name="Kawabata A."/>
            <person name="Hikiji T."/>
            <person name="Kobatake N."/>
            <person name="Inagaki H."/>
            <person name="Ikema Y."/>
            <person name="Okamoto S."/>
            <person name="Okitani R."/>
            <person name="Kawakami T."/>
            <person name="Noguchi S."/>
            <person name="Itoh T."/>
            <person name="Shigeta K."/>
            <person name="Senba T."/>
            <person name="Matsumura K."/>
            <person name="Nakajima Y."/>
            <person name="Mizuno T."/>
            <person name="Morinaga M."/>
            <person name="Sasaki M."/>
            <person name="Togashi T."/>
            <person name="Oyama M."/>
            <person name="Hata H."/>
            <person name="Watanabe M."/>
            <person name="Komatsu T."/>
            <person name="Mizushima-Sugano J."/>
            <person name="Satoh T."/>
            <person name="Shirai Y."/>
            <person name="Takahashi Y."/>
            <person name="Nakagawa K."/>
            <person name="Okumura K."/>
            <person name="Nagase T."/>
            <person name="Nomura N."/>
            <person name="Kikuchi H."/>
            <person name="Masuho Y."/>
            <person name="Yamashita R."/>
            <person name="Nakai K."/>
            <person name="Yada T."/>
            <person name="Nakamura Y."/>
            <person name="Ohara O."/>
            <person name="Isogai T."/>
            <person name="Sugano S."/>
        </authorList>
    </citation>
    <scope>NUCLEOTIDE SEQUENCE [LARGE SCALE MRNA]</scope>
    <source>
        <tissue>Fetal brain</tissue>
    </source>
</reference>
<reference key="5">
    <citation type="submission" date="2005-07" db="EMBL/GenBank/DDBJ databases">
        <authorList>
            <person name="Mural R.J."/>
            <person name="Istrail S."/>
            <person name="Sutton G.G."/>
            <person name="Florea L."/>
            <person name="Halpern A.L."/>
            <person name="Mobarry C.M."/>
            <person name="Lippert R."/>
            <person name="Walenz B."/>
            <person name="Shatkay H."/>
            <person name="Dew I."/>
            <person name="Miller J.R."/>
            <person name="Flanigan M.J."/>
            <person name="Edwards N.J."/>
            <person name="Bolanos R."/>
            <person name="Fasulo D."/>
            <person name="Halldorsson B.V."/>
            <person name="Hannenhalli S."/>
            <person name="Turner R."/>
            <person name="Yooseph S."/>
            <person name="Lu F."/>
            <person name="Nusskern D.R."/>
            <person name="Shue B.C."/>
            <person name="Zheng X.H."/>
            <person name="Zhong F."/>
            <person name="Delcher A.L."/>
            <person name="Huson D.H."/>
            <person name="Kravitz S.A."/>
            <person name="Mouchard L."/>
            <person name="Reinert K."/>
            <person name="Remington K.A."/>
            <person name="Clark A.G."/>
            <person name="Waterman M.S."/>
            <person name="Eichler E.E."/>
            <person name="Adams M.D."/>
            <person name="Hunkapiller M.W."/>
            <person name="Myers E.W."/>
            <person name="Venter J.C."/>
        </authorList>
    </citation>
    <scope>NUCLEOTIDE SEQUENCE [LARGE SCALE GENOMIC DNA]</scope>
</reference>
<reference key="6">
    <citation type="journal article" date="2004" name="Genome Res.">
        <title>The status, quality, and expansion of the NIH full-length cDNA project: the Mammalian Gene Collection (MGC).</title>
        <authorList>
            <consortium name="The MGC Project Team"/>
        </authorList>
    </citation>
    <scope>NUCLEOTIDE SEQUENCE [LARGE SCALE MRNA]</scope>
    <source>
        <tissue>Prostate</tissue>
    </source>
</reference>
<reference key="7">
    <citation type="submission" date="2004-07" db="UniProtKB">
        <authorList>
            <person name="Bienvenut W.V."/>
            <person name="Potts A."/>
            <person name="Brablan J."/>
            <person name="Quadroni M."/>
        </authorList>
    </citation>
    <scope>PROTEIN SEQUENCE OF 2-10 AND 127-135</scope>
    <scope>ACETYLATION AT ALA-2</scope>
    <scope>IDENTIFICATION BY MASS SPECTROMETRY</scope>
    <source>
        <tissue>B-cell lymphoma</tissue>
    </source>
</reference>
<reference key="8">
    <citation type="journal article" date="2004" name="Cell. Mol. Life Sci.">
        <title>Hcc-1 is a novel component of the nuclear matrix with growth inhibitory function.</title>
        <authorList>
            <person name="Leaw C.L."/>
            <person name="Ren E.C."/>
            <person name="Choong M.L."/>
        </authorList>
    </citation>
    <scope>FUNCTION</scope>
</reference>
<reference key="9">
    <citation type="journal article" date="2007" name="Exp. Cell Res.">
        <title>Intracellular characterization of DDX39, a novel growth-associated RNA helicase.</title>
        <authorList>
            <person name="Sugiura T."/>
            <person name="Sakurai K."/>
            <person name="Nagano Y."/>
        </authorList>
    </citation>
    <scope>FUNCTION</scope>
    <scope>INTERACTION WITH DDX39A AND FUS</scope>
</reference>
<reference key="10">
    <citation type="journal article" date="2009" name="Anal. Chem.">
        <title>Lys-N and trypsin cover complementary parts of the phosphoproteome in a refined SCX-based approach.</title>
        <authorList>
            <person name="Gauci S."/>
            <person name="Helbig A.O."/>
            <person name="Slijper M."/>
            <person name="Krijgsveld J."/>
            <person name="Heck A.J."/>
            <person name="Mohammed S."/>
        </authorList>
    </citation>
    <scope>ACETYLATION [LARGE SCALE ANALYSIS] AT ALA-2</scope>
    <scope>CLEAVAGE OF INITIATOR METHIONINE [LARGE SCALE ANALYSIS]</scope>
    <scope>IDENTIFICATION BY MASS SPECTROMETRY [LARGE SCALE ANALYSIS]</scope>
</reference>
<reference key="11">
    <citation type="journal article" date="2010" name="Genes Dev.">
        <title>ATP is required for interactions between UAP56 and two conserved mRNA export proteins, Aly and CIP29, to assemble the TREX complex.</title>
        <authorList>
            <person name="Dufu K."/>
            <person name="Livingstone M.J."/>
            <person name="Seebacher J."/>
            <person name="Gygi S.P."/>
            <person name="Wilson S.A."/>
            <person name="Reed R."/>
        </authorList>
    </citation>
    <scope>FUNCTION</scope>
    <scope>SUBCELLULAR LOCATION</scope>
    <scope>IDENTIFICATION IN THE TREX COMPLEX</scope>
    <scope>INTERACTION WITH DDX39B</scope>
</reference>
<reference key="12">
    <citation type="journal article" date="2012" name="Mol. Cell. Proteomics">
        <title>Comparative large-scale characterisation of plant vs. mammal proteins reveals similar and idiosyncratic N-alpha acetylation features.</title>
        <authorList>
            <person name="Bienvenut W.V."/>
            <person name="Sumpton D."/>
            <person name="Martinez A."/>
            <person name="Lilla S."/>
            <person name="Espagne C."/>
            <person name="Meinnel T."/>
            <person name="Giglione C."/>
        </authorList>
    </citation>
    <scope>ACETYLATION [LARGE SCALE ANALYSIS] AT ALA-2</scope>
    <scope>CLEAVAGE OF INITIATOR METHIONINE [LARGE SCALE ANALYSIS]</scope>
    <scope>IDENTIFICATION BY MASS SPECTROMETRY [LARGE SCALE ANALYSIS]</scope>
</reference>
<reference key="13">
    <citation type="journal article" date="2023" name="Cell Rep.">
        <title>Structural basis for high-order complex of SARNP and DDX39B to facilitate mRNP assembly.</title>
        <authorList>
            <person name="Xie Y."/>
            <person name="Gao S."/>
            <person name="Zhang K."/>
            <person name="Bhat P."/>
            <person name="Clarke B.P."/>
            <person name="Batten K."/>
            <person name="Mei M."/>
            <person name="Gazzara M."/>
            <person name="Shay J.W."/>
            <person name="Lynch K.W."/>
            <person name="Angelos A.E."/>
            <person name="Hill P.S."/>
            <person name="Ivey A.L."/>
            <person name="Fontoura B.M.A."/>
            <person name="Ren Y."/>
        </authorList>
    </citation>
    <scope>FUNCTION</scope>
    <scope>INTERACTION WITH DDX39B</scope>
    <scope>MUTAGENESIS OF 106-ARG--PHE-110; 107-ALA--ALA-210; 123-ARG--PHE-127; 153-ARG--PHE-157; 177-ARG--PHE-181 AND 203-ARG--PHE-207</scope>
</reference>
<reference evidence="11" key="14">
    <citation type="submission" date="2006-10" db="PDB data bank">
        <title>Solution structure of the SAP domain of human nuclear protein HCC-1.</title>
        <authorList>
            <consortium name="RIKEN structural genomics initiative (RSGI)"/>
        </authorList>
    </citation>
    <scope>STRUCTURE BY NMR OF 6-47</scope>
</reference>
<feature type="initiator methionine" description="Removed" evidence="9 12 13">
    <location>
        <position position="1"/>
    </location>
</feature>
<feature type="chain" id="PRO_0000083916" description="SAP domain-containing ribonucleoprotein">
    <location>
        <begin position="2"/>
        <end position="210"/>
    </location>
</feature>
<feature type="domain" description="SAP" evidence="2">
    <location>
        <begin position="8"/>
        <end position="42"/>
    </location>
</feature>
<feature type="region of interest" description="Disordered" evidence="3">
    <location>
        <begin position="45"/>
        <end position="86"/>
    </location>
</feature>
<feature type="region of interest" description="Disordered" evidence="3">
    <location>
        <begin position="161"/>
        <end position="210"/>
    </location>
</feature>
<feature type="compositionally biased region" description="Acidic residues" evidence="3">
    <location>
        <begin position="45"/>
        <end position="64"/>
    </location>
</feature>
<feature type="compositionally biased region" description="Basic and acidic residues" evidence="3">
    <location>
        <begin position="65"/>
        <end position="86"/>
    </location>
</feature>
<feature type="compositionally biased region" description="Polar residues" evidence="3">
    <location>
        <begin position="184"/>
        <end position="193"/>
    </location>
</feature>
<feature type="modified residue" description="N-acetylalanine" evidence="9 12 13">
    <location>
        <position position="2"/>
    </location>
</feature>
<feature type="modified residue" description="N6-acetyllysine" evidence="1">
    <location>
        <position position="10"/>
    </location>
</feature>
<feature type="modified residue" description="N6-acetyllysine" evidence="1">
    <location>
        <position position="142"/>
    </location>
</feature>
<feature type="modified residue" description="Phosphoserine" evidence="1">
    <location>
        <position position="163"/>
    </location>
</feature>
<feature type="mutagenesis site" description="Abolishes interaction with DDX39B; when associated with 123-A--A-127; 153-A--A-157; 177-A--A-181 and 203-A--A-207." evidence="8">
    <original>RAERF</original>
    <variation>AAERA</variation>
    <location>
        <begin position="106"/>
        <end position="110"/>
    </location>
</feature>
<feature type="mutagenesis site" description="Impairs interaction with DDX39B." evidence="8">
    <location>
        <begin position="107"/>
        <end position="210"/>
    </location>
</feature>
<feature type="mutagenesis site" description="Abolishes interaction with DDX39B; when associated with 106-A--A-110; 153-A--A-157; 177-A--A-181 and 203-A--A-207." evidence="8">
    <original>RAARF</original>
    <variation>AAARA</variation>
    <location>
        <begin position="123"/>
        <end position="127"/>
    </location>
</feature>
<feature type="mutagenesis site" description="Impairs interaction with DDX39B; when associated with 177-A--A-181 and 203-A--A-207. Abolishes interaction with DDX39B; when associated with 106-A--A-110; 123-A--A-127; 177-A--A-181 and 203-A--A-207." evidence="8">
    <original>RAQRF</original>
    <variation>AAQRA</variation>
    <location>
        <begin position="153"/>
        <end position="157"/>
    </location>
</feature>
<feature type="mutagenesis site" description="Impairs interaction with DDX39B; when associated with 153-A--A-157 and 203-A--A-207. Abolishes interaction with DDX39B; when associated with 106-A--A-110; 123-A--A-127; 153-A--A-157 and 203-A--A-207." evidence="8">
    <original>RKERF</original>
    <variation>AKERA</variation>
    <location>
        <begin position="177"/>
        <end position="181"/>
    </location>
</feature>
<feature type="mutagenesis site" description="Impairs interaction with DDX39B; when associated with 153-A--A-157 and 177-A--A-181. Abolishes interaction with DDX39B; when associated with 106-A--A-110; 123-A--A-127; 153-A--A-157 and 177-A--A-181." evidence="8">
    <original>RAERF</original>
    <variation>AAERA</variation>
    <location>
        <begin position="203"/>
        <end position="207"/>
    </location>
</feature>
<feature type="sequence conflict" description="In Ref. 3; AAF28994." evidence="10" ref="3">
    <original>F</original>
    <variation>V</variation>
    <location>
        <position position="127"/>
    </location>
</feature>
<feature type="sequence conflict" description="In Ref. 3; AAF28994." evidence="10" ref="3">
    <original>RAQRF</original>
    <variation>ELKDL</variation>
    <location>
        <begin position="153"/>
        <end position="157"/>
    </location>
</feature>
<feature type="sequence conflict" description="In Ref. 3; AAF28994." evidence="10" ref="3">
    <original>KKRKRAERFGIA</original>
    <variation>RRGKEQSALGLP</variation>
    <location>
        <begin position="199"/>
        <end position="210"/>
    </location>
</feature>
<feature type="turn" evidence="14">
    <location>
        <begin position="8"/>
        <end position="10"/>
    </location>
</feature>
<feature type="helix" evidence="14">
    <location>
        <begin position="13"/>
        <end position="23"/>
    </location>
</feature>
<feature type="helix" evidence="14">
    <location>
        <begin position="31"/>
        <end position="44"/>
    </location>
</feature>
<organism>
    <name type="scientific">Homo sapiens</name>
    <name type="common">Human</name>
    <dbReference type="NCBI Taxonomy" id="9606"/>
    <lineage>
        <taxon>Eukaryota</taxon>
        <taxon>Metazoa</taxon>
        <taxon>Chordata</taxon>
        <taxon>Craniata</taxon>
        <taxon>Vertebrata</taxon>
        <taxon>Euteleostomi</taxon>
        <taxon>Mammalia</taxon>
        <taxon>Eutheria</taxon>
        <taxon>Euarchontoglires</taxon>
        <taxon>Primates</taxon>
        <taxon>Haplorrhini</taxon>
        <taxon>Catarrhini</taxon>
        <taxon>Hominidae</taxon>
        <taxon>Homo</taxon>
    </lineage>
</organism>
<evidence type="ECO:0000250" key="1">
    <source>
        <dbReference type="UniProtKB" id="Q9D1J3"/>
    </source>
</evidence>
<evidence type="ECO:0000255" key="2">
    <source>
        <dbReference type="PROSITE-ProRule" id="PRU00186"/>
    </source>
</evidence>
<evidence type="ECO:0000256" key="3">
    <source>
        <dbReference type="SAM" id="MobiDB-lite"/>
    </source>
</evidence>
<evidence type="ECO:0000269" key="4">
    <source>
    </source>
</evidence>
<evidence type="ECO:0000269" key="5">
    <source>
    </source>
</evidence>
<evidence type="ECO:0000269" key="6">
    <source>
    </source>
</evidence>
<evidence type="ECO:0000269" key="7">
    <source>
    </source>
</evidence>
<evidence type="ECO:0000269" key="8">
    <source>
    </source>
</evidence>
<evidence type="ECO:0000269" key="9">
    <source ref="7"/>
</evidence>
<evidence type="ECO:0000305" key="10"/>
<evidence type="ECO:0007744" key="11">
    <source>
        <dbReference type="PDB" id="2DO1"/>
    </source>
</evidence>
<evidence type="ECO:0007744" key="12">
    <source>
    </source>
</evidence>
<evidence type="ECO:0007744" key="13">
    <source>
    </source>
</evidence>
<evidence type="ECO:0007829" key="14">
    <source>
        <dbReference type="PDB" id="2DO1"/>
    </source>
</evidence>
<dbReference type="EMBL" id="AJ409089">
    <property type="protein sequence ID" value="CAC37950.1"/>
    <property type="molecule type" value="Genomic_DNA"/>
</dbReference>
<dbReference type="EMBL" id="AF486281">
    <property type="protein sequence ID" value="AAM09686.1"/>
    <property type="molecule type" value="mRNA"/>
</dbReference>
<dbReference type="EMBL" id="AF161434">
    <property type="protein sequence ID" value="AAF28994.1"/>
    <property type="status" value="ALT_SEQ"/>
    <property type="molecule type" value="mRNA"/>
</dbReference>
<dbReference type="EMBL" id="AK290508">
    <property type="protein sequence ID" value="BAF83197.1"/>
    <property type="molecule type" value="mRNA"/>
</dbReference>
<dbReference type="EMBL" id="CH471054">
    <property type="protein sequence ID" value="EAW96838.1"/>
    <property type="molecule type" value="Genomic_DNA"/>
</dbReference>
<dbReference type="EMBL" id="BC007099">
    <property type="protein sequence ID" value="AAH07099.1"/>
    <property type="molecule type" value="mRNA"/>
</dbReference>
<dbReference type="CCDS" id="CCDS8892.1"/>
<dbReference type="PIR" id="JC7830">
    <property type="entry name" value="JC7830"/>
</dbReference>
<dbReference type="RefSeq" id="NP_149073.1">
    <property type="nucleotide sequence ID" value="NM_033082.4"/>
</dbReference>
<dbReference type="PDB" id="2DO1">
    <property type="method" value="NMR"/>
    <property type="chains" value="A=6-47"/>
</dbReference>
<dbReference type="PDBsum" id="2DO1"/>
<dbReference type="SMR" id="P82979"/>
<dbReference type="BioGRID" id="124049">
    <property type="interactions" value="158"/>
</dbReference>
<dbReference type="ComplexPortal" id="CPX-2488">
    <property type="entry name" value="TREX transcription-export complex, DX39B variant"/>
</dbReference>
<dbReference type="ComplexPortal" id="CPX-7261">
    <property type="entry name" value="TREX transcription-export complex, DX39A variant"/>
</dbReference>
<dbReference type="CORUM" id="P82979"/>
<dbReference type="FunCoup" id="P82979">
    <property type="interactions" value="3866"/>
</dbReference>
<dbReference type="IntAct" id="P82979">
    <property type="interactions" value="66"/>
</dbReference>
<dbReference type="MINT" id="P82979"/>
<dbReference type="STRING" id="9606.ENSP00000337632"/>
<dbReference type="GlyCosmos" id="P82979">
    <property type="glycosylation" value="2 sites, 1 glycan"/>
</dbReference>
<dbReference type="GlyGen" id="P82979">
    <property type="glycosylation" value="6 sites, 1 N-linked glycan (1 site), 1 O-linked glycan (5 sites)"/>
</dbReference>
<dbReference type="iPTMnet" id="P82979"/>
<dbReference type="MetOSite" id="P82979"/>
<dbReference type="PhosphoSitePlus" id="P82979"/>
<dbReference type="SwissPalm" id="P82979"/>
<dbReference type="BioMuta" id="SARNP"/>
<dbReference type="DMDM" id="18202440"/>
<dbReference type="jPOST" id="P82979"/>
<dbReference type="MassIVE" id="P82979"/>
<dbReference type="PaxDb" id="9606-ENSP00000337632"/>
<dbReference type="PeptideAtlas" id="P82979"/>
<dbReference type="ProteomicsDB" id="57726"/>
<dbReference type="Pumba" id="P82979"/>
<dbReference type="TopDownProteomics" id="P82979"/>
<dbReference type="Antibodypedia" id="15547">
    <property type="antibodies" value="204 antibodies from 31 providers"/>
</dbReference>
<dbReference type="DNASU" id="84324"/>
<dbReference type="Ensembl" id="ENST00000336133.8">
    <property type="protein sequence ID" value="ENSP00000337632.3"/>
    <property type="gene ID" value="ENSG00000205323.9"/>
</dbReference>
<dbReference type="Ensembl" id="ENST00000546604.5">
    <property type="protein sequence ID" value="ENSP00000449409.1"/>
    <property type="gene ID" value="ENSG00000205323.9"/>
</dbReference>
<dbReference type="GeneID" id="84324"/>
<dbReference type="KEGG" id="hsa:84324"/>
<dbReference type="MANE-Select" id="ENST00000336133.8">
    <property type="protein sequence ID" value="ENSP00000337632.3"/>
    <property type="RefSeq nucleotide sequence ID" value="NM_033082.4"/>
    <property type="RefSeq protein sequence ID" value="NP_149073.1"/>
</dbReference>
<dbReference type="UCSC" id="uc001sht.4">
    <property type="organism name" value="human"/>
</dbReference>
<dbReference type="AGR" id="HGNC:24432"/>
<dbReference type="CTD" id="84324"/>
<dbReference type="DisGeNET" id="84324"/>
<dbReference type="GeneCards" id="SARNP"/>
<dbReference type="HGNC" id="HGNC:24432">
    <property type="gene designation" value="SARNP"/>
</dbReference>
<dbReference type="HPA" id="ENSG00000205323">
    <property type="expression patterns" value="Low tissue specificity"/>
</dbReference>
<dbReference type="MIM" id="610049">
    <property type="type" value="gene"/>
</dbReference>
<dbReference type="neXtProt" id="NX_P82979"/>
<dbReference type="OpenTargets" id="ENSG00000205323"/>
<dbReference type="PharmGKB" id="PA165513309"/>
<dbReference type="VEuPathDB" id="HostDB:ENSG00000205323"/>
<dbReference type="eggNOG" id="KOG0720">
    <property type="taxonomic scope" value="Eukaryota"/>
</dbReference>
<dbReference type="eggNOG" id="KOG4259">
    <property type="taxonomic scope" value="Eukaryota"/>
</dbReference>
<dbReference type="GeneTree" id="ENSGT00390000002944"/>
<dbReference type="HOGENOM" id="CLU_073926_1_0_1"/>
<dbReference type="InParanoid" id="P82979"/>
<dbReference type="OMA" id="ETPTKKH"/>
<dbReference type="OrthoDB" id="5837849at2759"/>
<dbReference type="PAN-GO" id="P82979">
    <property type="GO annotations" value="2 GO annotations based on evolutionary models"/>
</dbReference>
<dbReference type="PhylomeDB" id="P82979"/>
<dbReference type="TreeFam" id="TF319843"/>
<dbReference type="PathwayCommons" id="P82979"/>
<dbReference type="Reactome" id="R-HSA-159236">
    <property type="pathway name" value="Transport of Mature mRNA derived from an Intron-Containing Transcript"/>
</dbReference>
<dbReference type="Reactome" id="R-HSA-72187">
    <property type="pathway name" value="mRNA 3'-end processing"/>
</dbReference>
<dbReference type="Reactome" id="R-HSA-73856">
    <property type="pathway name" value="RNA Polymerase II Transcription Termination"/>
</dbReference>
<dbReference type="SignaLink" id="P82979"/>
<dbReference type="BioGRID-ORCS" id="84324">
    <property type="hits" value="288 hits in 1154 CRISPR screens"/>
</dbReference>
<dbReference type="CD-CODE" id="804901D1">
    <property type="entry name" value="Nuclear speckle"/>
</dbReference>
<dbReference type="CD-CODE" id="91857CE7">
    <property type="entry name" value="Nucleolus"/>
</dbReference>
<dbReference type="ChiTaRS" id="SARNP">
    <property type="organism name" value="human"/>
</dbReference>
<dbReference type="EvolutionaryTrace" id="P82979"/>
<dbReference type="GeneWiki" id="CIP29"/>
<dbReference type="GenomeRNAi" id="84324"/>
<dbReference type="Pharos" id="P82979">
    <property type="development level" value="Tbio"/>
</dbReference>
<dbReference type="PRO" id="PR:P82979"/>
<dbReference type="Proteomes" id="UP000005640">
    <property type="component" value="Chromosome 12"/>
</dbReference>
<dbReference type="RNAct" id="P82979">
    <property type="molecule type" value="protein"/>
</dbReference>
<dbReference type="Bgee" id="ENSG00000205323">
    <property type="expression patterns" value="Expressed in ganglionic eminence and 154 other cell types or tissues"/>
</dbReference>
<dbReference type="ExpressionAtlas" id="P82979">
    <property type="expression patterns" value="baseline and differential"/>
</dbReference>
<dbReference type="GO" id="GO:0036464">
    <property type="term" value="C:cytoplasmic ribonucleoprotein granule"/>
    <property type="evidence" value="ECO:0000314"/>
    <property type="project" value="HPA"/>
</dbReference>
<dbReference type="GO" id="GO:0016607">
    <property type="term" value="C:nuclear speck"/>
    <property type="evidence" value="ECO:0000314"/>
    <property type="project" value="UniProtKB"/>
</dbReference>
<dbReference type="GO" id="GO:0005654">
    <property type="term" value="C:nucleoplasm"/>
    <property type="evidence" value="ECO:0000304"/>
    <property type="project" value="Reactome"/>
</dbReference>
<dbReference type="GO" id="GO:0005634">
    <property type="term" value="C:nucleus"/>
    <property type="evidence" value="ECO:0000318"/>
    <property type="project" value="GO_Central"/>
</dbReference>
<dbReference type="GO" id="GO:0000346">
    <property type="term" value="C:transcription export complex"/>
    <property type="evidence" value="ECO:0000314"/>
    <property type="project" value="UniProtKB"/>
</dbReference>
<dbReference type="GO" id="GO:0003682">
    <property type="term" value="F:chromatin binding"/>
    <property type="evidence" value="ECO:0007669"/>
    <property type="project" value="Ensembl"/>
</dbReference>
<dbReference type="GO" id="GO:0003677">
    <property type="term" value="F:DNA binding"/>
    <property type="evidence" value="ECO:0007669"/>
    <property type="project" value="UniProtKB-KW"/>
</dbReference>
<dbReference type="GO" id="GO:0003723">
    <property type="term" value="F:RNA binding"/>
    <property type="evidence" value="ECO:0007005"/>
    <property type="project" value="UniProtKB"/>
</dbReference>
<dbReference type="GO" id="GO:0006406">
    <property type="term" value="P:mRNA export from nucleus"/>
    <property type="evidence" value="ECO:0000314"/>
    <property type="project" value="UniProtKB"/>
</dbReference>
<dbReference type="GO" id="GO:0000122">
    <property type="term" value="P:negative regulation of transcription by RNA polymerase II"/>
    <property type="evidence" value="ECO:0007669"/>
    <property type="project" value="Ensembl"/>
</dbReference>
<dbReference type="GO" id="GO:0016973">
    <property type="term" value="P:poly(A)+ mRNA export from nucleus"/>
    <property type="evidence" value="ECO:0000318"/>
    <property type="project" value="GO_Central"/>
</dbReference>
<dbReference type="GO" id="GO:0006417">
    <property type="term" value="P:regulation of translation"/>
    <property type="evidence" value="ECO:0007669"/>
    <property type="project" value="UniProtKB-KW"/>
</dbReference>
<dbReference type="FunFam" id="1.10.720.30:FF:000013">
    <property type="entry name" value="SAP domain-containing ribonucleoprotein"/>
    <property type="match status" value="1"/>
</dbReference>
<dbReference type="Gene3D" id="1.10.720.30">
    <property type="entry name" value="SAP domain"/>
    <property type="match status" value="1"/>
</dbReference>
<dbReference type="InterPro" id="IPR003034">
    <property type="entry name" value="SAP_dom"/>
</dbReference>
<dbReference type="InterPro" id="IPR036361">
    <property type="entry name" value="SAP_dom_sf"/>
</dbReference>
<dbReference type="InterPro" id="IPR052240">
    <property type="entry name" value="SAP_domain_ribonucleoprotein"/>
</dbReference>
<dbReference type="PANTHER" id="PTHR46551">
    <property type="entry name" value="SAP DOMAIN-CONTAINING RIBONUCLEOPROTEIN"/>
    <property type="match status" value="1"/>
</dbReference>
<dbReference type="PANTHER" id="PTHR46551:SF2">
    <property type="entry name" value="SAP DOMAIN-CONTAINING RIBONUCLEOPROTEIN"/>
    <property type="match status" value="1"/>
</dbReference>
<dbReference type="Pfam" id="PF02037">
    <property type="entry name" value="SAP"/>
    <property type="match status" value="1"/>
</dbReference>
<dbReference type="SMART" id="SM00513">
    <property type="entry name" value="SAP"/>
    <property type="match status" value="1"/>
</dbReference>
<dbReference type="SUPFAM" id="SSF68906">
    <property type="entry name" value="SAP domain"/>
    <property type="match status" value="1"/>
</dbReference>
<dbReference type="PROSITE" id="PS50800">
    <property type="entry name" value="SAP"/>
    <property type="match status" value="1"/>
</dbReference>
<name>SARNP_HUMAN</name>
<accession>P82979</accession>
<accession>A8K393</accession>
<accession>Q9P066</accession>
<gene>
    <name type="primary">SARNP</name>
    <name type="synonym">HCC1</name>
    <name type="ORF">HSPC316</name>
</gene>
<sequence>MATETVELHKLKLAELKQECLARGLETKGIKQDLIHRLQAYLEEHAEEEANEEDVLGDETEEEETKPIELPVKEEEPPEKTVDVAAEKKVVKITSEIPQTERMQKRAERFNVPVSLESKKAARAARFGISSVPTKGLSSDNKPMVNLDKLKERAQRFGLNVSSISRKSEDDEKLKKRKERFGIVTSSAGTGTTEDTEAKKRKRAERFGIA</sequence>
<protein>
    <recommendedName>
        <fullName>SAP domain-containing ribonucleoprotein</fullName>
    </recommendedName>
    <alternativeName>
        <fullName>Cytokine-induced protein of 29 kDa</fullName>
    </alternativeName>
    <alternativeName>
        <fullName>Nuclear protein Hcc-1</fullName>
    </alternativeName>
    <alternativeName>
        <fullName>Proliferation-associated cytokine-inducible protein CIP29</fullName>
    </alternativeName>
</protein>
<keyword id="KW-0002">3D-structure</keyword>
<keyword id="KW-0007">Acetylation</keyword>
<keyword id="KW-0903">Direct protein sequencing</keyword>
<keyword id="KW-0238">DNA-binding</keyword>
<keyword id="KW-0509">mRNA transport</keyword>
<keyword id="KW-0539">Nucleus</keyword>
<keyword id="KW-0597">Phosphoprotein</keyword>
<keyword id="KW-1267">Proteomics identification</keyword>
<keyword id="KW-1185">Reference proteome</keyword>
<keyword id="KW-0694">RNA-binding</keyword>
<keyword id="KW-0804">Transcription</keyword>
<keyword id="KW-0805">Transcription regulation</keyword>
<keyword id="KW-0810">Translation regulation</keyword>
<keyword id="KW-0813">Transport</keyword>
<proteinExistence type="evidence at protein level"/>